<feature type="chain" id="PRO_0000413287" description="Glutamyl-tRNA(Gln) amidotransferase subunit B, mitochondrial">
    <location>
        <begin position="1"/>
        <end position="514"/>
    </location>
</feature>
<gene>
    <name type="ORF">NAEGRDRAFT_36099</name>
</gene>
<accession>D2V9W6</accession>
<evidence type="ECO:0000255" key="1">
    <source>
        <dbReference type="HAMAP-Rule" id="MF_03147"/>
    </source>
</evidence>
<organism>
    <name type="scientific">Naegleria gruberi</name>
    <name type="common">Amoeba</name>
    <dbReference type="NCBI Taxonomy" id="5762"/>
    <lineage>
        <taxon>Eukaryota</taxon>
        <taxon>Discoba</taxon>
        <taxon>Heterolobosea</taxon>
        <taxon>Tetramitia</taxon>
        <taxon>Eutetramitia</taxon>
        <taxon>Vahlkampfiidae</taxon>
        <taxon>Naegleria</taxon>
    </lineage>
</organism>
<comment type="function">
    <text evidence="1">Allows the formation of correctly charged Gln-tRNA(Gln) through the transamidation of misacylated Glu-tRNA(Gln) in the mitochondria. The reaction takes place in the presence of glutamine and ATP through an activated gamma-phospho-Glu-tRNA(Gln).</text>
</comment>
<comment type="catalytic activity">
    <reaction evidence="1">
        <text>L-glutamyl-tRNA(Gln) + L-glutamine + ATP + H2O = L-glutaminyl-tRNA(Gln) + L-glutamate + ADP + phosphate + H(+)</text>
        <dbReference type="Rhea" id="RHEA:17521"/>
        <dbReference type="Rhea" id="RHEA-COMP:9681"/>
        <dbReference type="Rhea" id="RHEA-COMP:9684"/>
        <dbReference type="ChEBI" id="CHEBI:15377"/>
        <dbReference type="ChEBI" id="CHEBI:15378"/>
        <dbReference type="ChEBI" id="CHEBI:29985"/>
        <dbReference type="ChEBI" id="CHEBI:30616"/>
        <dbReference type="ChEBI" id="CHEBI:43474"/>
        <dbReference type="ChEBI" id="CHEBI:58359"/>
        <dbReference type="ChEBI" id="CHEBI:78520"/>
        <dbReference type="ChEBI" id="CHEBI:78521"/>
        <dbReference type="ChEBI" id="CHEBI:456216"/>
    </reaction>
</comment>
<comment type="subunit">
    <text evidence="1">Subunit of the heterotrimeric GatCAB amidotransferase (AdT) complex, composed of A, B and C subunits.</text>
</comment>
<comment type="subcellular location">
    <subcellularLocation>
        <location evidence="1">Mitochondrion</location>
    </subcellularLocation>
</comment>
<comment type="miscellaneous">
    <text evidence="1">This protein may be expected to contain an N-terminal transit peptide but none has been predicted.</text>
</comment>
<comment type="similarity">
    <text evidence="1">Belongs to the GatB/GatE family. GatB subfamily.</text>
</comment>
<keyword id="KW-0067">ATP-binding</keyword>
<keyword id="KW-0436">Ligase</keyword>
<keyword id="KW-0496">Mitochondrion</keyword>
<keyword id="KW-0547">Nucleotide-binding</keyword>
<keyword id="KW-0648">Protein biosynthesis</keyword>
<keyword id="KW-1185">Reference proteome</keyword>
<name>GATB_NAEGR</name>
<sequence>MHTNKKYLHTSGDESVLKGYKPVIGLEIHAQIKSKSKLFSTSSTEFTNSMPNVNVTLFDASFPGTLPSLNEYCIRQAVKTGLAVGGKINLYSQFDRKHYFYPDLPLGYQITQQFYPLVSEGKLRIDIPQGDGTYKPKYIRIARIQVEQDSGKSVHDLDNTLIDLNRAGNPLMEIITYPDLNSSLEAELFVKKLQFMLRHIGTCDGNMEEGSLRCDVNVSVYNASAGDHPLSGTRCEVKNISSANNIPRAIDFEIKRHIELLTNGQKIEQQTRTFDAKKGETLLLRSKENIPDYKFFPDPDLPYVELTEDYVESVKTTIPSLPDDIVEKLTSEPYNLNFYDANILLTNNGGVEFFETILHDSRWSSKLNPKLVANWIASELMGLLNASEITLSDSPVSYIQIGSIVEAIQHEDISGKMAKKIIKIMFDEKSGEMALDIAEKNGWRQITDKNVIGELCDKIIAEHPTEVGNLRNGKENVFQFLVAQVIKLSKGNASPSLVNQILREKATNKPTTTD</sequence>
<reference key="1">
    <citation type="journal article" date="2010" name="Cell">
        <title>The genome of Naegleria gruberi illuminates early eukaryotic versatility.</title>
        <authorList>
            <person name="Fritz-Laylin L.K."/>
            <person name="Prochnik S.E."/>
            <person name="Ginger M.L."/>
            <person name="Dacks J.B."/>
            <person name="Carpenter M.L."/>
            <person name="Field M.C."/>
            <person name="Kuo A."/>
            <person name="Paredez A."/>
            <person name="Chapman J."/>
            <person name="Pham J."/>
            <person name="Shu S."/>
            <person name="Neupane R."/>
            <person name="Cipriano M."/>
            <person name="Mancuso J."/>
            <person name="Tu H."/>
            <person name="Salamov A."/>
            <person name="Lindquist E."/>
            <person name="Shapiro H."/>
            <person name="Lucas S."/>
            <person name="Grigoriev I.V."/>
            <person name="Cande W.Z."/>
            <person name="Fulton C."/>
            <person name="Rokhsar D.S."/>
            <person name="Dawson S.C."/>
        </authorList>
    </citation>
    <scope>NUCLEOTIDE SEQUENCE [LARGE SCALE GENOMIC DNA]</scope>
    <source>
        <strain>ATCC 30224 / NEG-M</strain>
    </source>
</reference>
<proteinExistence type="inferred from homology"/>
<dbReference type="EC" id="6.3.5.-" evidence="1"/>
<dbReference type="EMBL" id="GG738859">
    <property type="protein sequence ID" value="EFC46319.1"/>
    <property type="molecule type" value="Genomic_DNA"/>
</dbReference>
<dbReference type="RefSeq" id="XP_002679063.1">
    <property type="nucleotide sequence ID" value="XM_002679017.1"/>
</dbReference>
<dbReference type="SMR" id="D2V9W6"/>
<dbReference type="FunCoup" id="D2V9W6">
    <property type="interactions" value="271"/>
</dbReference>
<dbReference type="STRING" id="5762.D2V9W6"/>
<dbReference type="EnsemblProtists" id="EFC46319">
    <property type="protein sequence ID" value="EFC46319"/>
    <property type="gene ID" value="NAEGRDRAFT_36099"/>
</dbReference>
<dbReference type="GeneID" id="8859436"/>
<dbReference type="VEuPathDB" id="AmoebaDB:NAEGRDRAFT_36099"/>
<dbReference type="eggNOG" id="KOG2438">
    <property type="taxonomic scope" value="Eukaryota"/>
</dbReference>
<dbReference type="InParanoid" id="D2V9W6"/>
<dbReference type="OMA" id="ARKWWMG"/>
<dbReference type="OrthoDB" id="1722066at2759"/>
<dbReference type="Proteomes" id="UP000006671">
    <property type="component" value="Unassembled WGS sequence"/>
</dbReference>
<dbReference type="GO" id="GO:0030956">
    <property type="term" value="C:glutamyl-tRNA(Gln) amidotransferase complex"/>
    <property type="evidence" value="ECO:0007669"/>
    <property type="project" value="UniProtKB-UniRule"/>
</dbReference>
<dbReference type="GO" id="GO:0005739">
    <property type="term" value="C:mitochondrion"/>
    <property type="evidence" value="ECO:0007669"/>
    <property type="project" value="UniProtKB-SubCell"/>
</dbReference>
<dbReference type="GO" id="GO:0005524">
    <property type="term" value="F:ATP binding"/>
    <property type="evidence" value="ECO:0007669"/>
    <property type="project" value="UniProtKB-KW"/>
</dbReference>
<dbReference type="GO" id="GO:0050567">
    <property type="term" value="F:glutaminyl-tRNA synthase (glutamine-hydrolyzing) activity"/>
    <property type="evidence" value="ECO:0007669"/>
    <property type="project" value="UniProtKB-UniRule"/>
</dbReference>
<dbReference type="GO" id="GO:0070681">
    <property type="term" value="P:glutaminyl-tRNAGln biosynthesis via transamidation"/>
    <property type="evidence" value="ECO:0007669"/>
    <property type="project" value="UniProtKB-UniRule"/>
</dbReference>
<dbReference type="GO" id="GO:0032543">
    <property type="term" value="P:mitochondrial translation"/>
    <property type="evidence" value="ECO:0007669"/>
    <property type="project" value="UniProtKB-UniRule"/>
</dbReference>
<dbReference type="FunFam" id="1.10.10.410:FF:000001">
    <property type="entry name" value="Aspartyl/glutamyl-tRNA(Asn/Gln) amidotransferase subunit B"/>
    <property type="match status" value="1"/>
</dbReference>
<dbReference type="Gene3D" id="1.10.10.410">
    <property type="match status" value="1"/>
</dbReference>
<dbReference type="HAMAP" id="MF_00121">
    <property type="entry name" value="GatB"/>
    <property type="match status" value="1"/>
</dbReference>
<dbReference type="InterPro" id="IPR017959">
    <property type="entry name" value="Asn/Gln-tRNA_amidoTrfase_suB/E"/>
</dbReference>
<dbReference type="InterPro" id="IPR006075">
    <property type="entry name" value="Asn/Gln-tRNA_Trfase_suB/E_cat"/>
</dbReference>
<dbReference type="InterPro" id="IPR018027">
    <property type="entry name" value="Asn/Gln_amidotransferase"/>
</dbReference>
<dbReference type="InterPro" id="IPR003789">
    <property type="entry name" value="Asn/Gln_tRNA_amidoTrase-B-like"/>
</dbReference>
<dbReference type="InterPro" id="IPR004413">
    <property type="entry name" value="GatB"/>
</dbReference>
<dbReference type="InterPro" id="IPR023168">
    <property type="entry name" value="GatB_Yqey_C_2"/>
</dbReference>
<dbReference type="InterPro" id="IPR017958">
    <property type="entry name" value="Gln-tRNA_amidoTrfase_suB_CS"/>
</dbReference>
<dbReference type="InterPro" id="IPR014746">
    <property type="entry name" value="Gln_synth/guanido_kin_cat_dom"/>
</dbReference>
<dbReference type="NCBIfam" id="TIGR00133">
    <property type="entry name" value="gatB"/>
    <property type="match status" value="1"/>
</dbReference>
<dbReference type="NCBIfam" id="NF004012">
    <property type="entry name" value="PRK05477.1-2"/>
    <property type="match status" value="1"/>
</dbReference>
<dbReference type="NCBIfam" id="NF004014">
    <property type="entry name" value="PRK05477.1-4"/>
    <property type="match status" value="1"/>
</dbReference>
<dbReference type="PANTHER" id="PTHR11659">
    <property type="entry name" value="GLUTAMYL-TRNA GLN AMIDOTRANSFERASE SUBUNIT B MITOCHONDRIAL AND PROKARYOTIC PET112-RELATED"/>
    <property type="match status" value="1"/>
</dbReference>
<dbReference type="PANTHER" id="PTHR11659:SF0">
    <property type="entry name" value="GLUTAMYL-TRNA(GLN) AMIDOTRANSFERASE SUBUNIT B, MITOCHONDRIAL"/>
    <property type="match status" value="1"/>
</dbReference>
<dbReference type="Pfam" id="PF02934">
    <property type="entry name" value="GatB_N"/>
    <property type="match status" value="1"/>
</dbReference>
<dbReference type="Pfam" id="PF02637">
    <property type="entry name" value="GatB_Yqey"/>
    <property type="match status" value="1"/>
</dbReference>
<dbReference type="SMART" id="SM00845">
    <property type="entry name" value="GatB_Yqey"/>
    <property type="match status" value="1"/>
</dbReference>
<dbReference type="SUPFAM" id="SSF89095">
    <property type="entry name" value="GatB/YqeY motif"/>
    <property type="match status" value="1"/>
</dbReference>
<dbReference type="SUPFAM" id="SSF55931">
    <property type="entry name" value="Glutamine synthetase/guanido kinase"/>
    <property type="match status" value="1"/>
</dbReference>
<dbReference type="PROSITE" id="PS01234">
    <property type="entry name" value="GATB"/>
    <property type="match status" value="1"/>
</dbReference>
<protein>
    <recommendedName>
        <fullName evidence="1">Glutamyl-tRNA(Gln) amidotransferase subunit B, mitochondrial</fullName>
        <shortName evidence="1">Glu-AdT subunit B</shortName>
        <ecNumber evidence="1">6.3.5.-</ecNumber>
    </recommendedName>
</protein>